<feature type="chain" id="PRO_0000165941" description="Allantoinase">
    <location>
        <begin position="1"/>
        <end position="448"/>
    </location>
</feature>
<feature type="binding site" evidence="1">
    <location>
        <position position="60"/>
    </location>
    <ligand>
        <name>Zn(2+)</name>
        <dbReference type="ChEBI" id="CHEBI:29105"/>
        <label>1</label>
    </ligand>
</feature>
<feature type="binding site" evidence="1">
    <location>
        <position position="62"/>
    </location>
    <ligand>
        <name>Zn(2+)</name>
        <dbReference type="ChEBI" id="CHEBI:29105"/>
        <label>1</label>
    </ligand>
</feature>
<feature type="binding site" description="via carbamate group" evidence="1">
    <location>
        <position position="147"/>
    </location>
    <ligand>
        <name>Zn(2+)</name>
        <dbReference type="ChEBI" id="CHEBI:29105"/>
        <label>1</label>
    </ligand>
</feature>
<feature type="binding site" description="via carbamate group" evidence="1">
    <location>
        <position position="147"/>
    </location>
    <ligand>
        <name>Zn(2+)</name>
        <dbReference type="ChEBI" id="CHEBI:29105"/>
        <label>2</label>
    </ligand>
</feature>
<feature type="binding site" evidence="1">
    <location>
        <position position="183"/>
    </location>
    <ligand>
        <name>Zn(2+)</name>
        <dbReference type="ChEBI" id="CHEBI:29105"/>
        <label>2</label>
    </ligand>
</feature>
<feature type="binding site" evidence="1">
    <location>
        <position position="239"/>
    </location>
    <ligand>
        <name>Zn(2+)</name>
        <dbReference type="ChEBI" id="CHEBI:29105"/>
        <label>2</label>
    </ligand>
</feature>
<feature type="binding site" evidence="1">
    <location>
        <position position="312"/>
    </location>
    <ligand>
        <name>Zn(2+)</name>
        <dbReference type="ChEBI" id="CHEBI:29105"/>
        <label>1</label>
    </ligand>
</feature>
<feature type="modified residue" description="N6-carboxylysine" evidence="1">
    <location>
        <position position="147"/>
    </location>
</feature>
<dbReference type="EC" id="3.5.2.5" evidence="1"/>
<dbReference type="EMBL" id="AE000513">
    <property type="protein sequence ID" value="AAF10727.1"/>
    <property type="molecule type" value="Genomic_DNA"/>
</dbReference>
<dbReference type="PIR" id="E75429">
    <property type="entry name" value="E75429"/>
</dbReference>
<dbReference type="RefSeq" id="NP_294877.1">
    <property type="nucleotide sequence ID" value="NC_001263.1"/>
</dbReference>
<dbReference type="RefSeq" id="WP_010887796.1">
    <property type="nucleotide sequence ID" value="NC_001263.1"/>
</dbReference>
<dbReference type="SMR" id="Q9RV76"/>
<dbReference type="FunCoup" id="Q9RV76">
    <property type="interactions" value="243"/>
</dbReference>
<dbReference type="STRING" id="243230.DR_1153"/>
<dbReference type="PaxDb" id="243230-DR_1153"/>
<dbReference type="EnsemblBacteria" id="AAF10727">
    <property type="protein sequence ID" value="AAF10727"/>
    <property type="gene ID" value="DR_1153"/>
</dbReference>
<dbReference type="GeneID" id="69517399"/>
<dbReference type="KEGG" id="dra:DR_1153"/>
<dbReference type="PATRIC" id="fig|243230.17.peg.1350"/>
<dbReference type="eggNOG" id="COG0044">
    <property type="taxonomic scope" value="Bacteria"/>
</dbReference>
<dbReference type="HOGENOM" id="CLU_015572_4_0_0"/>
<dbReference type="InParanoid" id="Q9RV76"/>
<dbReference type="OrthoDB" id="9765462at2"/>
<dbReference type="UniPathway" id="UPA00395">
    <property type="reaction ID" value="UER00653"/>
</dbReference>
<dbReference type="Proteomes" id="UP000002524">
    <property type="component" value="Chromosome 1"/>
</dbReference>
<dbReference type="GO" id="GO:0005737">
    <property type="term" value="C:cytoplasm"/>
    <property type="evidence" value="ECO:0000318"/>
    <property type="project" value="GO_Central"/>
</dbReference>
<dbReference type="GO" id="GO:0004038">
    <property type="term" value="F:allantoinase activity"/>
    <property type="evidence" value="ECO:0000318"/>
    <property type="project" value="GO_Central"/>
</dbReference>
<dbReference type="GO" id="GO:0050897">
    <property type="term" value="F:cobalt ion binding"/>
    <property type="evidence" value="ECO:0007669"/>
    <property type="project" value="InterPro"/>
</dbReference>
<dbReference type="GO" id="GO:0008270">
    <property type="term" value="F:zinc ion binding"/>
    <property type="evidence" value="ECO:0007669"/>
    <property type="project" value="InterPro"/>
</dbReference>
<dbReference type="GO" id="GO:0000256">
    <property type="term" value="P:allantoin catabolic process"/>
    <property type="evidence" value="ECO:0007669"/>
    <property type="project" value="UniProtKB-UniRule"/>
</dbReference>
<dbReference type="GO" id="GO:0006145">
    <property type="term" value="P:purine nucleobase catabolic process"/>
    <property type="evidence" value="ECO:0000318"/>
    <property type="project" value="GO_Central"/>
</dbReference>
<dbReference type="CDD" id="cd01315">
    <property type="entry name" value="L-HYD_ALN"/>
    <property type="match status" value="1"/>
</dbReference>
<dbReference type="Gene3D" id="3.20.20.140">
    <property type="entry name" value="Metal-dependent hydrolases"/>
    <property type="match status" value="1"/>
</dbReference>
<dbReference type="Gene3D" id="2.30.40.10">
    <property type="entry name" value="Urease, subunit C, domain 1"/>
    <property type="match status" value="1"/>
</dbReference>
<dbReference type="HAMAP" id="MF_01645">
    <property type="entry name" value="Hydantoinase"/>
    <property type="match status" value="1"/>
</dbReference>
<dbReference type="InterPro" id="IPR017593">
    <property type="entry name" value="Allantoinase"/>
</dbReference>
<dbReference type="InterPro" id="IPR047604">
    <property type="entry name" value="Allantoinase_bact"/>
</dbReference>
<dbReference type="InterPro" id="IPR006680">
    <property type="entry name" value="Amidohydro-rel"/>
</dbReference>
<dbReference type="InterPro" id="IPR050138">
    <property type="entry name" value="DHOase/Allantoinase_Hydrolase"/>
</dbReference>
<dbReference type="InterPro" id="IPR011059">
    <property type="entry name" value="Metal-dep_hydrolase_composite"/>
</dbReference>
<dbReference type="InterPro" id="IPR032466">
    <property type="entry name" value="Metal_Hydrolase"/>
</dbReference>
<dbReference type="NCBIfam" id="TIGR03178">
    <property type="entry name" value="allantoinase"/>
    <property type="match status" value="1"/>
</dbReference>
<dbReference type="NCBIfam" id="NF004839">
    <property type="entry name" value="PRK06189.1"/>
    <property type="match status" value="1"/>
</dbReference>
<dbReference type="PANTHER" id="PTHR43668">
    <property type="entry name" value="ALLANTOINASE"/>
    <property type="match status" value="1"/>
</dbReference>
<dbReference type="PANTHER" id="PTHR43668:SF4">
    <property type="entry name" value="ALLANTOINASE"/>
    <property type="match status" value="1"/>
</dbReference>
<dbReference type="Pfam" id="PF01979">
    <property type="entry name" value="Amidohydro_1"/>
    <property type="match status" value="1"/>
</dbReference>
<dbReference type="SUPFAM" id="SSF51338">
    <property type="entry name" value="Composite domain of metallo-dependent hydrolases"/>
    <property type="match status" value="1"/>
</dbReference>
<dbReference type="SUPFAM" id="SSF51556">
    <property type="entry name" value="Metallo-dependent hydrolases"/>
    <property type="match status" value="1"/>
</dbReference>
<keyword id="KW-0378">Hydrolase</keyword>
<keyword id="KW-0479">Metal-binding</keyword>
<keyword id="KW-0659">Purine metabolism</keyword>
<keyword id="KW-1185">Reference proteome</keyword>
<keyword id="KW-0862">Zinc</keyword>
<gene>
    <name evidence="1" type="primary">allB</name>
    <name type="ordered locus">DR_1153</name>
</gene>
<reference key="1">
    <citation type="journal article" date="1999" name="Science">
        <title>Genome sequence of the radioresistant bacterium Deinococcus radiodurans R1.</title>
        <authorList>
            <person name="White O."/>
            <person name="Eisen J.A."/>
            <person name="Heidelberg J.F."/>
            <person name="Hickey E.K."/>
            <person name="Peterson J.D."/>
            <person name="Dodson R.J."/>
            <person name="Haft D.H."/>
            <person name="Gwinn M.L."/>
            <person name="Nelson W.C."/>
            <person name="Richardson D.L."/>
            <person name="Moffat K.S."/>
            <person name="Qin H."/>
            <person name="Jiang L."/>
            <person name="Pamphile W."/>
            <person name="Crosby M."/>
            <person name="Shen M."/>
            <person name="Vamathevan J.J."/>
            <person name="Lam P."/>
            <person name="McDonald L.A."/>
            <person name="Utterback T.R."/>
            <person name="Zalewski C."/>
            <person name="Makarova K.S."/>
            <person name="Aravind L."/>
            <person name="Daly M.J."/>
            <person name="Minton K.W."/>
            <person name="Fleischmann R.D."/>
            <person name="Ketchum K.A."/>
            <person name="Nelson K.E."/>
            <person name="Salzberg S.L."/>
            <person name="Smith H.O."/>
            <person name="Venter J.C."/>
            <person name="Fraser C.M."/>
        </authorList>
    </citation>
    <scope>NUCLEOTIDE SEQUENCE [LARGE SCALE GENOMIC DNA]</scope>
    <source>
        <strain>ATCC 13939 / DSM 20539 / JCM 16871 / CCUG 27074 / LMG 4051 / NBRC 15346 / NCIMB 9279 / VKM B-1422 / R1</strain>
    </source>
</reference>
<organism>
    <name type="scientific">Deinococcus radiodurans (strain ATCC 13939 / DSM 20539 / JCM 16871 / CCUG 27074 / LMG 4051 / NBRC 15346 / NCIMB 9279 / VKM B-1422 / R1)</name>
    <dbReference type="NCBI Taxonomy" id="243230"/>
    <lineage>
        <taxon>Bacteria</taxon>
        <taxon>Thermotogati</taxon>
        <taxon>Deinococcota</taxon>
        <taxon>Deinococci</taxon>
        <taxon>Deinococcales</taxon>
        <taxon>Deinococcaceae</taxon>
        <taxon>Deinococcus</taxon>
    </lineage>
</organism>
<evidence type="ECO:0000255" key="1">
    <source>
        <dbReference type="HAMAP-Rule" id="MF_01645"/>
    </source>
</evidence>
<proteinExistence type="inferred from homology"/>
<name>ALLB_DEIRA</name>
<sequence length="448" mass="48559">MSLDLLLRGAVLVTPEGERRADLGIVGGQIAELTDEIATPAAQTLDVSGLHVFPGVLDDHVHLNEPGRTHWEGFETGTQALAAGGATSFLDMPLNSSPPVLTRERFEDKARLGEEKSLIDFGLWGGLTPLNLDQLDDLAECGVIGLKAFMSHSGLDEFPAADDLTLYEGMRTAKRHGLVVATHAESNEFTRRLTETARAQGKSGVRDYLESRPVVTELEAVQRALLFAQDTGAALHLVHVSSGAAVALAYEGKQKGIDVTIETCPHYLHFTGEDVERVGAALKCAPPLRDPAVQEELWRELLAGHIDTVGSDHSPAPPDMKTSEDFFSLWGGISGAQSTLNVMLEDGYAQRGLPLEIIAALLALNPAQRFGLPQKGRLAVGADADFALVALGEKFTLDTLYDRWQQNPYRGQSFQGRVHATYLRGQPVYQNGEFTGTPRGRLLRPRSL</sequence>
<comment type="function">
    <text evidence="1">Catalyzes the conversion of allantoin (5-ureidohydantoin) to allantoic acid by hydrolytic cleavage of the five-member hydantoin ring.</text>
</comment>
<comment type="catalytic activity">
    <reaction evidence="1">
        <text>(S)-allantoin + H2O = allantoate + H(+)</text>
        <dbReference type="Rhea" id="RHEA:17029"/>
        <dbReference type="ChEBI" id="CHEBI:15377"/>
        <dbReference type="ChEBI" id="CHEBI:15378"/>
        <dbReference type="ChEBI" id="CHEBI:15678"/>
        <dbReference type="ChEBI" id="CHEBI:17536"/>
        <dbReference type="EC" id="3.5.2.5"/>
    </reaction>
</comment>
<comment type="cofactor">
    <cofactor evidence="1">
        <name>Zn(2+)</name>
        <dbReference type="ChEBI" id="CHEBI:29105"/>
    </cofactor>
    <text evidence="1">Binds 2 Zn(2+) ions per subunit.</text>
</comment>
<comment type="pathway">
    <text evidence="1">Nitrogen metabolism; (S)-allantoin degradation; allantoate from (S)-allantoin: step 1/1.</text>
</comment>
<comment type="subunit">
    <text evidence="1">Homotetramer.</text>
</comment>
<comment type="PTM">
    <text evidence="1">Carboxylation allows a single lysine to coordinate two zinc ions.</text>
</comment>
<comment type="similarity">
    <text evidence="1">Belongs to the metallo-dependent hydrolases superfamily. Allantoinase family.</text>
</comment>
<accession>Q9RV76</accession>
<protein>
    <recommendedName>
        <fullName evidence="1">Allantoinase</fullName>
        <ecNumber evidence="1">3.5.2.5</ecNumber>
    </recommendedName>
    <alternativeName>
        <fullName evidence="1">Allantoin-utilizing enzyme</fullName>
    </alternativeName>
</protein>